<evidence type="ECO:0000255" key="1">
    <source>
        <dbReference type="HAMAP-Rule" id="MF_01238"/>
    </source>
</evidence>
<name>NANT_SALNS</name>
<dbReference type="EMBL" id="CP001113">
    <property type="protein sequence ID" value="ACF64741.1"/>
    <property type="molecule type" value="Genomic_DNA"/>
</dbReference>
<dbReference type="RefSeq" id="WP_000108071.1">
    <property type="nucleotide sequence ID" value="NZ_CCMR01000001.1"/>
</dbReference>
<dbReference type="SMR" id="B4T749"/>
<dbReference type="KEGG" id="see:SNSL254_A3601"/>
<dbReference type="HOGENOM" id="CLU_001265_46_8_6"/>
<dbReference type="Proteomes" id="UP000008824">
    <property type="component" value="Chromosome"/>
</dbReference>
<dbReference type="GO" id="GO:0005886">
    <property type="term" value="C:plasma membrane"/>
    <property type="evidence" value="ECO:0007669"/>
    <property type="project" value="UniProtKB-SubCell"/>
</dbReference>
<dbReference type="GO" id="GO:0046943">
    <property type="term" value="F:carboxylic acid transmembrane transporter activity"/>
    <property type="evidence" value="ECO:0007669"/>
    <property type="project" value="TreeGrafter"/>
</dbReference>
<dbReference type="GO" id="GO:0015538">
    <property type="term" value="F:sialic acid:proton symporter activity"/>
    <property type="evidence" value="ECO:0007669"/>
    <property type="project" value="UniProtKB-UniRule"/>
</dbReference>
<dbReference type="CDD" id="cd17316">
    <property type="entry name" value="MFS_SV2_like"/>
    <property type="match status" value="1"/>
</dbReference>
<dbReference type="FunFam" id="1.20.1250.20:FF:000027">
    <property type="entry name" value="Sialic acid transporter NanT"/>
    <property type="match status" value="1"/>
</dbReference>
<dbReference type="FunFam" id="1.20.1250.20:FF:000038">
    <property type="entry name" value="Sialic acid transporter NanT"/>
    <property type="match status" value="1"/>
</dbReference>
<dbReference type="Gene3D" id="1.20.1250.20">
    <property type="entry name" value="MFS general substrate transporter like domains"/>
    <property type="match status" value="2"/>
</dbReference>
<dbReference type="HAMAP" id="MF_01238">
    <property type="entry name" value="MFS_NanT"/>
    <property type="match status" value="1"/>
</dbReference>
<dbReference type="InterPro" id="IPR011701">
    <property type="entry name" value="MFS"/>
</dbReference>
<dbReference type="InterPro" id="IPR020846">
    <property type="entry name" value="MFS_dom"/>
</dbReference>
<dbReference type="InterPro" id="IPR036259">
    <property type="entry name" value="MFS_trans_sf"/>
</dbReference>
<dbReference type="InterPro" id="IPR004742">
    <property type="entry name" value="SA_transporter"/>
</dbReference>
<dbReference type="NCBIfam" id="TIGR00891">
    <property type="entry name" value="2A0112"/>
    <property type="match status" value="1"/>
</dbReference>
<dbReference type="NCBIfam" id="NF003024">
    <property type="entry name" value="PRK03893.1"/>
    <property type="match status" value="1"/>
</dbReference>
<dbReference type="PANTHER" id="PTHR23508">
    <property type="entry name" value="CARBOXYLIC ACID TRANSPORTER PROTEIN HOMOLOG"/>
    <property type="match status" value="1"/>
</dbReference>
<dbReference type="PANTHER" id="PTHR23508:SF3">
    <property type="entry name" value="SIALIC ACID TRANSPORTER NANT"/>
    <property type="match status" value="1"/>
</dbReference>
<dbReference type="Pfam" id="PF07690">
    <property type="entry name" value="MFS_1"/>
    <property type="match status" value="1"/>
</dbReference>
<dbReference type="SUPFAM" id="SSF103473">
    <property type="entry name" value="MFS general substrate transporter"/>
    <property type="match status" value="1"/>
</dbReference>
<dbReference type="PROSITE" id="PS50850">
    <property type="entry name" value="MFS"/>
    <property type="match status" value="1"/>
</dbReference>
<protein>
    <recommendedName>
        <fullName evidence="1">Sialic acid transporter NanT</fullName>
    </recommendedName>
    <alternativeName>
        <fullName evidence="1">Sialic acid permease</fullName>
    </alternativeName>
    <alternativeName>
        <fullName evidence="1">Sialic acid/H(+) symporter</fullName>
    </alternativeName>
</protein>
<reference key="1">
    <citation type="journal article" date="2011" name="J. Bacteriol.">
        <title>Comparative genomics of 28 Salmonella enterica isolates: evidence for CRISPR-mediated adaptive sublineage evolution.</title>
        <authorList>
            <person name="Fricke W.F."/>
            <person name="Mammel M.K."/>
            <person name="McDermott P.F."/>
            <person name="Tartera C."/>
            <person name="White D.G."/>
            <person name="Leclerc J.E."/>
            <person name="Ravel J."/>
            <person name="Cebula T.A."/>
        </authorList>
    </citation>
    <scope>NUCLEOTIDE SEQUENCE [LARGE SCALE GENOMIC DNA]</scope>
    <source>
        <strain>SL254</strain>
    </source>
</reference>
<gene>
    <name evidence="1" type="primary">nanT</name>
    <name type="ordered locus">SNSL254_A3601</name>
</gene>
<sequence length="496" mass="53629">MSTSTQNIPWYRHLNRAQWRAFSAAWLGYLLDGFDFVLIALVLTEVQSEFGLTTVQAASLISAAFISRWFGGLLLGAMGDRYGRRLAMVSSIILFSVGTLACGFAPGYTTMFIARLVIGMGMAGEYGSSATYVIESWPKHLRNKASGFLISGFSVGAVVAAQVYSLVVPVWGWRALFFIGILPIIFALWLRKNIPEAEDWKEKHAGKAPVRTMVDILYRGEHRIINILMTFAAAAALWFCFAGNLQNAAIVAGLGLLCAVIFISFMVQSSGKRWPTGVMLMLVVLFAFLYSWPIQALLPTYLKTELAYDPHTVANVLFFSGFGAAVGCCVGGFLGDWLGTRKAYVCSLLASQILIIPVFAIGGTNVWVLGLLLFFQQMLGQGIAGILPKLIGGYFDTDQRAAGLGFTYNVGALGGALAPILGALIAQRLDLGTALASLSFSLTFVVILLIGLDMPSRVQRWLRPEALRTHDAIDDKPFSGAVPLGSGKGAFVKTKS</sequence>
<accession>B4T749</accession>
<proteinExistence type="inferred from homology"/>
<feature type="chain" id="PRO_1000214062" description="Sialic acid transporter NanT">
    <location>
        <begin position="1"/>
        <end position="496"/>
    </location>
</feature>
<feature type="transmembrane region" description="Helical" evidence="1">
    <location>
        <begin position="22"/>
        <end position="42"/>
    </location>
</feature>
<feature type="transmembrane region" description="Helical" evidence="1">
    <location>
        <begin position="58"/>
        <end position="78"/>
    </location>
</feature>
<feature type="transmembrane region" description="Helical" evidence="1">
    <location>
        <begin position="86"/>
        <end position="106"/>
    </location>
</feature>
<feature type="transmembrane region" description="Helical" evidence="1">
    <location>
        <begin position="116"/>
        <end position="136"/>
    </location>
</feature>
<feature type="transmembrane region" description="Helical" evidence="1">
    <location>
        <begin position="148"/>
        <end position="168"/>
    </location>
</feature>
<feature type="transmembrane region" description="Helical" evidence="1">
    <location>
        <begin position="170"/>
        <end position="190"/>
    </location>
</feature>
<feature type="transmembrane region" description="Helical" evidence="1">
    <location>
        <begin position="224"/>
        <end position="244"/>
    </location>
</feature>
<feature type="transmembrane region" description="Helical" evidence="1">
    <location>
        <begin position="247"/>
        <end position="267"/>
    </location>
</feature>
<feature type="transmembrane region" description="Helical" evidence="1">
    <location>
        <begin position="278"/>
        <end position="298"/>
    </location>
</feature>
<feature type="transmembrane region" description="Helical" evidence="1">
    <location>
        <begin position="313"/>
        <end position="333"/>
    </location>
</feature>
<feature type="transmembrane region" description="Helical" evidence="1">
    <location>
        <begin position="353"/>
        <end position="373"/>
    </location>
</feature>
<feature type="transmembrane region" description="Helical" evidence="1">
    <location>
        <begin position="374"/>
        <end position="394"/>
    </location>
</feature>
<feature type="transmembrane region" description="Helical" evidence="1">
    <location>
        <begin position="406"/>
        <end position="426"/>
    </location>
</feature>
<feature type="transmembrane region" description="Helical" evidence="1">
    <location>
        <begin position="431"/>
        <end position="451"/>
    </location>
</feature>
<comment type="function">
    <text evidence="1">Catalyzes the proton-dependent transport of sialic acid.</text>
</comment>
<comment type="catalytic activity">
    <reaction evidence="1">
        <text>N-acetylneuraminate(in) + H(+)(in) = N-acetylneuraminate(out) + H(+)(out)</text>
        <dbReference type="Rhea" id="RHEA:28987"/>
        <dbReference type="ChEBI" id="CHEBI:15378"/>
        <dbReference type="ChEBI" id="CHEBI:35418"/>
    </reaction>
</comment>
<comment type="subcellular location">
    <subcellularLocation>
        <location evidence="1">Cell inner membrane</location>
        <topology evidence="1">Multi-pass membrane protein</topology>
    </subcellularLocation>
</comment>
<comment type="similarity">
    <text evidence="1">Belongs to the major facilitator superfamily. Sialate:H(+) symporter (SHS) (TC 2.A.1.12) family.</text>
</comment>
<organism>
    <name type="scientific">Salmonella newport (strain SL254)</name>
    <dbReference type="NCBI Taxonomy" id="423368"/>
    <lineage>
        <taxon>Bacteria</taxon>
        <taxon>Pseudomonadati</taxon>
        <taxon>Pseudomonadota</taxon>
        <taxon>Gammaproteobacteria</taxon>
        <taxon>Enterobacterales</taxon>
        <taxon>Enterobacteriaceae</taxon>
        <taxon>Salmonella</taxon>
    </lineage>
</organism>
<keyword id="KW-0997">Cell inner membrane</keyword>
<keyword id="KW-1003">Cell membrane</keyword>
<keyword id="KW-0472">Membrane</keyword>
<keyword id="KW-0762">Sugar transport</keyword>
<keyword id="KW-0812">Transmembrane</keyword>
<keyword id="KW-1133">Transmembrane helix</keyword>
<keyword id="KW-0813">Transport</keyword>